<dbReference type="EC" id="7.1.1.-" evidence="1"/>
<dbReference type="EMBL" id="CP000868">
    <property type="protein sequence ID" value="ABX14722.1"/>
    <property type="molecule type" value="Genomic_DNA"/>
</dbReference>
<dbReference type="EMBL" id="AP009385">
    <property type="protein sequence ID" value="BAG44128.1"/>
    <property type="molecule type" value="Genomic_DNA"/>
</dbReference>
<dbReference type="RefSeq" id="WP_006398801.1">
    <property type="nucleotide sequence ID" value="NC_010804.1"/>
</dbReference>
<dbReference type="SMR" id="A9AFZ0"/>
<dbReference type="STRING" id="395019.BMULJ_02232"/>
<dbReference type="KEGG" id="bmj:BMULJ_02232"/>
<dbReference type="KEGG" id="bmu:Bmul_1031"/>
<dbReference type="eggNOG" id="COG0649">
    <property type="taxonomic scope" value="Bacteria"/>
</dbReference>
<dbReference type="HOGENOM" id="CLU_015134_1_1_4"/>
<dbReference type="Proteomes" id="UP000008815">
    <property type="component" value="Chromosome 1"/>
</dbReference>
<dbReference type="GO" id="GO:0005886">
    <property type="term" value="C:plasma membrane"/>
    <property type="evidence" value="ECO:0007669"/>
    <property type="project" value="UniProtKB-SubCell"/>
</dbReference>
<dbReference type="GO" id="GO:0051287">
    <property type="term" value="F:NAD binding"/>
    <property type="evidence" value="ECO:0007669"/>
    <property type="project" value="InterPro"/>
</dbReference>
<dbReference type="GO" id="GO:0050136">
    <property type="term" value="F:NADH:ubiquinone reductase (non-electrogenic) activity"/>
    <property type="evidence" value="ECO:0007669"/>
    <property type="project" value="UniProtKB-UniRule"/>
</dbReference>
<dbReference type="GO" id="GO:0048038">
    <property type="term" value="F:quinone binding"/>
    <property type="evidence" value="ECO:0007669"/>
    <property type="project" value="UniProtKB-KW"/>
</dbReference>
<dbReference type="FunFam" id="1.10.645.10:FF:000005">
    <property type="entry name" value="NADH-quinone oxidoreductase subunit D"/>
    <property type="match status" value="1"/>
</dbReference>
<dbReference type="Gene3D" id="1.10.645.10">
    <property type="entry name" value="Cytochrome-c3 Hydrogenase, chain B"/>
    <property type="match status" value="1"/>
</dbReference>
<dbReference type="HAMAP" id="MF_01358">
    <property type="entry name" value="NDH1_NuoD"/>
    <property type="match status" value="1"/>
</dbReference>
<dbReference type="InterPro" id="IPR001135">
    <property type="entry name" value="NADH_Q_OxRdtase_suD"/>
</dbReference>
<dbReference type="InterPro" id="IPR014029">
    <property type="entry name" value="NADH_UbQ_OxRdtase_49kDa_CS"/>
</dbReference>
<dbReference type="InterPro" id="IPR022885">
    <property type="entry name" value="NDH1_su_D/H"/>
</dbReference>
<dbReference type="InterPro" id="IPR029014">
    <property type="entry name" value="NiFe-Hase_large"/>
</dbReference>
<dbReference type="NCBIfam" id="TIGR01962">
    <property type="entry name" value="NuoD"/>
    <property type="match status" value="1"/>
</dbReference>
<dbReference type="NCBIfam" id="NF004739">
    <property type="entry name" value="PRK06075.1"/>
    <property type="match status" value="1"/>
</dbReference>
<dbReference type="PANTHER" id="PTHR11993:SF10">
    <property type="entry name" value="NADH DEHYDROGENASE [UBIQUINONE] IRON-SULFUR PROTEIN 2, MITOCHONDRIAL"/>
    <property type="match status" value="1"/>
</dbReference>
<dbReference type="PANTHER" id="PTHR11993">
    <property type="entry name" value="NADH-UBIQUINONE OXIDOREDUCTASE 49 KDA SUBUNIT"/>
    <property type="match status" value="1"/>
</dbReference>
<dbReference type="Pfam" id="PF00346">
    <property type="entry name" value="Complex1_49kDa"/>
    <property type="match status" value="1"/>
</dbReference>
<dbReference type="SUPFAM" id="SSF56762">
    <property type="entry name" value="HydB/Nqo4-like"/>
    <property type="match status" value="1"/>
</dbReference>
<dbReference type="PROSITE" id="PS00535">
    <property type="entry name" value="COMPLEX1_49K"/>
    <property type="match status" value="1"/>
</dbReference>
<accession>A9AFZ0</accession>
<name>NUOD_BURM1</name>
<comment type="function">
    <text evidence="1">NDH-1 shuttles electrons from NADH, via FMN and iron-sulfur (Fe-S) centers, to quinones in the respiratory chain. The immediate electron acceptor for the enzyme in this species is believed to be ubiquinone. Couples the redox reaction to proton translocation (for every two electrons transferred, four hydrogen ions are translocated across the cytoplasmic membrane), and thus conserves the redox energy in a proton gradient.</text>
</comment>
<comment type="catalytic activity">
    <reaction evidence="1">
        <text>a quinone + NADH + 5 H(+)(in) = a quinol + NAD(+) + 4 H(+)(out)</text>
        <dbReference type="Rhea" id="RHEA:57888"/>
        <dbReference type="ChEBI" id="CHEBI:15378"/>
        <dbReference type="ChEBI" id="CHEBI:24646"/>
        <dbReference type="ChEBI" id="CHEBI:57540"/>
        <dbReference type="ChEBI" id="CHEBI:57945"/>
        <dbReference type="ChEBI" id="CHEBI:132124"/>
    </reaction>
</comment>
<comment type="subunit">
    <text evidence="1">NDH-1 is composed of 14 different subunits. Subunits NuoB, C, D, E, F, and G constitute the peripheral sector of the complex.</text>
</comment>
<comment type="subcellular location">
    <subcellularLocation>
        <location evidence="1">Cell inner membrane</location>
        <topology evidence="1">Peripheral membrane protein</topology>
        <orientation evidence="1">Cytoplasmic side</orientation>
    </subcellularLocation>
</comment>
<comment type="similarity">
    <text evidence="1">Belongs to the complex I 49 kDa subunit family.</text>
</comment>
<organism>
    <name type="scientific">Burkholderia multivorans (strain ATCC 17616 / 249)</name>
    <dbReference type="NCBI Taxonomy" id="395019"/>
    <lineage>
        <taxon>Bacteria</taxon>
        <taxon>Pseudomonadati</taxon>
        <taxon>Pseudomonadota</taxon>
        <taxon>Betaproteobacteria</taxon>
        <taxon>Burkholderiales</taxon>
        <taxon>Burkholderiaceae</taxon>
        <taxon>Burkholderia</taxon>
        <taxon>Burkholderia cepacia complex</taxon>
    </lineage>
</organism>
<feature type="chain" id="PRO_0000371832" description="NADH-quinone oxidoreductase subunit D">
    <location>
        <begin position="1"/>
        <end position="417"/>
    </location>
</feature>
<protein>
    <recommendedName>
        <fullName evidence="1">NADH-quinone oxidoreductase subunit D</fullName>
        <ecNumber evidence="1">7.1.1.-</ecNumber>
    </recommendedName>
    <alternativeName>
        <fullName evidence="1">NADH dehydrogenase I subunit D</fullName>
    </alternativeName>
    <alternativeName>
        <fullName evidence="1">NDH-1 subunit D</fullName>
    </alternativeName>
</protein>
<evidence type="ECO:0000255" key="1">
    <source>
        <dbReference type="HAMAP-Rule" id="MF_01358"/>
    </source>
</evidence>
<gene>
    <name evidence="1" type="primary">nuoD</name>
    <name type="ordered locus">Bmul_1031</name>
    <name type="ordered locus">BMULJ_02232</name>
</gene>
<sequence length="417" mass="47413">MAEIKNYTLNFGPQHPAAHGVLRLVLELDGEVIQRADPHIGLLHRATEKLAENKTFIQSVPYMDRLDYVSMMVNEHGYVLAIEKLLGIAVPERAQYIRVLFDEITRVLNHLMWIGAHALDVGAMAVFLYAFREREDLMDVYEAVSGARMHAAYYRPGGVYRDLPDAMPQYKASKIRNEKALAKMNEARSGSVLDFIDDFFTRFPKCIDEYETLLTDNRIWKQRLVGIGVVSPERALQMGLTGPMLRGSGIAWDLRKKQPYEVYDRMDFDVPVGVNGDCYDRYLVRVEEMRQSVRIAKQCIEWLRKNPGPVMTDNHKVAPPSRVGMKTNMEDLIHHFKLFTEGFHVPEGEAYAAVEHPKGEFGIYLVSDGANKPYRLKIRAPGFAHLASLDEMARGHMIADAVTIIGTQDIVFGEIDR</sequence>
<proteinExistence type="inferred from homology"/>
<keyword id="KW-0997">Cell inner membrane</keyword>
<keyword id="KW-1003">Cell membrane</keyword>
<keyword id="KW-0472">Membrane</keyword>
<keyword id="KW-0520">NAD</keyword>
<keyword id="KW-0874">Quinone</keyword>
<keyword id="KW-1185">Reference proteome</keyword>
<keyword id="KW-1278">Translocase</keyword>
<keyword id="KW-0813">Transport</keyword>
<keyword id="KW-0830">Ubiquinone</keyword>
<reference key="1">
    <citation type="submission" date="2007-10" db="EMBL/GenBank/DDBJ databases">
        <title>Complete sequence of chromosome 1 of Burkholderia multivorans ATCC 17616.</title>
        <authorList>
            <person name="Copeland A."/>
            <person name="Lucas S."/>
            <person name="Lapidus A."/>
            <person name="Barry K."/>
            <person name="Glavina del Rio T."/>
            <person name="Dalin E."/>
            <person name="Tice H."/>
            <person name="Pitluck S."/>
            <person name="Chain P."/>
            <person name="Malfatti S."/>
            <person name="Shin M."/>
            <person name="Vergez L."/>
            <person name="Schmutz J."/>
            <person name="Larimer F."/>
            <person name="Land M."/>
            <person name="Hauser L."/>
            <person name="Kyrpides N."/>
            <person name="Kim E."/>
            <person name="Tiedje J."/>
            <person name="Richardson P."/>
        </authorList>
    </citation>
    <scope>NUCLEOTIDE SEQUENCE [LARGE SCALE GENOMIC DNA]</scope>
    <source>
        <strain>ATCC 17616 / 249</strain>
    </source>
</reference>
<reference key="2">
    <citation type="submission" date="2007-04" db="EMBL/GenBank/DDBJ databases">
        <title>Complete genome sequence of Burkholderia multivorans ATCC 17616.</title>
        <authorList>
            <person name="Ohtsubo Y."/>
            <person name="Yamashita A."/>
            <person name="Kurokawa K."/>
            <person name="Takami H."/>
            <person name="Yuhara S."/>
            <person name="Nishiyama E."/>
            <person name="Endo R."/>
            <person name="Miyazaki R."/>
            <person name="Ono A."/>
            <person name="Yano K."/>
            <person name="Ito M."/>
            <person name="Sota M."/>
            <person name="Yuji N."/>
            <person name="Hattori M."/>
            <person name="Tsuda M."/>
        </authorList>
    </citation>
    <scope>NUCLEOTIDE SEQUENCE [LARGE SCALE GENOMIC DNA]</scope>
    <source>
        <strain>ATCC 17616 / 249</strain>
    </source>
</reference>